<comment type="function">
    <text>May play some role in transport of Fe(3+)-pyochelin.</text>
</comment>
<comment type="subcellular location">
    <subcellularLocation>
        <location evidence="2">Cell membrane</location>
        <topology evidence="2">Multi-pass membrane protein</topology>
    </subcellularLocation>
</comment>
<sequence>MPRQSGFGWAWRVPLALAGSLAAATASGYLLTRGLPLDDPLERLYAGLFGALGVGLLLLVGGLLARGPGNFAWRLGGSLLVLGLALWLLAGRG</sequence>
<name>FPTB_PSEAE</name>
<feature type="signal peptide" evidence="1">
    <location>
        <begin position="1"/>
        <end position="25"/>
    </location>
</feature>
<feature type="chain" id="PRO_0000021287" description="Protein FptB">
    <location>
        <begin position="26"/>
        <end position="93"/>
    </location>
</feature>
<feature type="transmembrane region" description="Helical" evidence="1">
    <location>
        <begin position="44"/>
        <end position="64"/>
    </location>
</feature>
<feature type="transmembrane region" description="Helical" evidence="1">
    <location>
        <begin position="71"/>
        <end position="91"/>
    </location>
</feature>
<gene>
    <name type="primary">fptB</name>
    <name type="ordered locus">PA4220</name>
</gene>
<organism>
    <name type="scientific">Pseudomonas aeruginosa (strain ATCC 15692 / DSM 22644 / CIP 104116 / JCM 14847 / LMG 12228 / 1C / PRS 101 / PAO1)</name>
    <dbReference type="NCBI Taxonomy" id="208964"/>
    <lineage>
        <taxon>Bacteria</taxon>
        <taxon>Pseudomonadati</taxon>
        <taxon>Pseudomonadota</taxon>
        <taxon>Gammaproteobacteria</taxon>
        <taxon>Pseudomonadales</taxon>
        <taxon>Pseudomonadaceae</taxon>
        <taxon>Pseudomonas</taxon>
    </lineage>
</organism>
<protein>
    <recommendedName>
        <fullName>Protein FptB</fullName>
    </recommendedName>
</protein>
<keyword id="KW-1003">Cell membrane</keyword>
<keyword id="KW-0472">Membrane</keyword>
<keyword id="KW-1185">Reference proteome</keyword>
<keyword id="KW-0732">Signal</keyword>
<keyword id="KW-0812">Transmembrane</keyword>
<keyword id="KW-1133">Transmembrane helix</keyword>
<evidence type="ECO:0000255" key="1"/>
<evidence type="ECO:0000305" key="2"/>
<proteinExistence type="inferred from homology"/>
<dbReference type="EMBL" id="U03161">
    <property type="protein sequence ID" value="AAC43214.1"/>
    <property type="molecule type" value="Unassigned_DNA"/>
</dbReference>
<dbReference type="EMBL" id="AE004091">
    <property type="protein sequence ID" value="AAG07608.1"/>
    <property type="molecule type" value="Genomic_DNA"/>
</dbReference>
<dbReference type="PIR" id="B36942">
    <property type="entry name" value="B36942"/>
</dbReference>
<dbReference type="RefSeq" id="NP_252910.1">
    <property type="nucleotide sequence ID" value="NC_002516.2"/>
</dbReference>
<dbReference type="RefSeq" id="WP_003107348.1">
    <property type="nucleotide sequence ID" value="NZ_QZGE01000042.1"/>
</dbReference>
<dbReference type="STRING" id="208964.PA4220"/>
<dbReference type="PaxDb" id="208964-PA4220"/>
<dbReference type="DNASU" id="880418"/>
<dbReference type="GeneID" id="880418"/>
<dbReference type="KEGG" id="pae:PA4220"/>
<dbReference type="PATRIC" id="fig|208964.12.peg.4421"/>
<dbReference type="PseudoCAP" id="PA4220"/>
<dbReference type="HOGENOM" id="CLU_2397275_0_0_6"/>
<dbReference type="InParanoid" id="P42513"/>
<dbReference type="BioCyc" id="PAER208964:G1FZ6-4293-MONOMER"/>
<dbReference type="Proteomes" id="UP000002438">
    <property type="component" value="Chromosome"/>
</dbReference>
<dbReference type="GO" id="GO:0005886">
    <property type="term" value="C:plasma membrane"/>
    <property type="evidence" value="ECO:0007669"/>
    <property type="project" value="UniProtKB-SubCell"/>
</dbReference>
<accession>P42513</accession>
<reference key="1">
    <citation type="journal article" date="1994" name="J. Bacteriol.">
        <title>FptA, the Fe(III)-pyochelin receptor of Pseudomonas aeruginosa: a phenolate siderophore receptor homologous to hydroxamate siderophore receptors.</title>
        <authorList>
            <person name="Ankenbauer R.G."/>
            <person name="Quan H.N."/>
        </authorList>
    </citation>
    <scope>NUCLEOTIDE SEQUENCE [GENOMIC DNA]</scope>
    <source>
        <strain>PAO / IA602</strain>
    </source>
</reference>
<reference key="2">
    <citation type="journal article" date="2000" name="Nature">
        <title>Complete genome sequence of Pseudomonas aeruginosa PAO1, an opportunistic pathogen.</title>
        <authorList>
            <person name="Stover C.K."/>
            <person name="Pham X.-Q.T."/>
            <person name="Erwin A.L."/>
            <person name="Mizoguchi S.D."/>
            <person name="Warrener P."/>
            <person name="Hickey M.J."/>
            <person name="Brinkman F.S.L."/>
            <person name="Hufnagle W.O."/>
            <person name="Kowalik D.J."/>
            <person name="Lagrou M."/>
            <person name="Garber R.L."/>
            <person name="Goltry L."/>
            <person name="Tolentino E."/>
            <person name="Westbrock-Wadman S."/>
            <person name="Yuan Y."/>
            <person name="Brody L.L."/>
            <person name="Coulter S.N."/>
            <person name="Folger K.R."/>
            <person name="Kas A."/>
            <person name="Larbig K."/>
            <person name="Lim R.M."/>
            <person name="Smith K.A."/>
            <person name="Spencer D.H."/>
            <person name="Wong G.K.-S."/>
            <person name="Wu Z."/>
            <person name="Paulsen I.T."/>
            <person name="Reizer J."/>
            <person name="Saier M.H. Jr."/>
            <person name="Hancock R.E.W."/>
            <person name="Lory S."/>
            <person name="Olson M.V."/>
        </authorList>
    </citation>
    <scope>NUCLEOTIDE SEQUENCE [LARGE SCALE GENOMIC DNA]</scope>
    <source>
        <strain>ATCC 15692 / DSM 22644 / CIP 104116 / JCM 14847 / LMG 12228 / 1C / PRS 101 / PAO1</strain>
    </source>
</reference>